<name>CML12_ARATH</name>
<proteinExistence type="evidence at protein level"/>
<evidence type="ECO:0000255" key="1">
    <source>
        <dbReference type="PROSITE-ProRule" id="PRU00448"/>
    </source>
</evidence>
<evidence type="ECO:0000269" key="2">
    <source>
    </source>
</evidence>
<evidence type="ECO:0000269" key="3">
    <source>
    </source>
</evidence>
<evidence type="ECO:0000269" key="4">
    <source>
    </source>
</evidence>
<evidence type="ECO:0000303" key="5">
    <source>
    </source>
</evidence>
<evidence type="ECO:0000303" key="6">
    <source ref="7"/>
</evidence>
<evidence type="ECO:0000305" key="7"/>
<evidence type="ECO:0000312" key="8">
    <source>
        <dbReference type="Araport" id="AT2G41100"/>
    </source>
</evidence>
<evidence type="ECO:0000312" key="9">
    <source>
        <dbReference type="EMBL" id="AAD12001.1"/>
    </source>
</evidence>
<feature type="chain" id="PRO_0000073657" description="Calmodulin-like protein 12">
    <location>
        <begin position="1"/>
        <end position="324"/>
    </location>
</feature>
<feature type="domain" description="EF-hand 1" evidence="1">
    <location>
        <begin position="8"/>
        <end position="43"/>
    </location>
</feature>
<feature type="domain" description="EF-hand 2" evidence="1">
    <location>
        <begin position="44"/>
        <end position="79"/>
    </location>
</feature>
<feature type="domain" description="EF-hand 3" evidence="1">
    <location>
        <begin position="97"/>
        <end position="132"/>
    </location>
</feature>
<feature type="domain" description="EF-hand 4" evidence="1">
    <location>
        <begin position="133"/>
        <end position="168"/>
    </location>
</feature>
<feature type="domain" description="EF-hand 5" evidence="1">
    <location>
        <begin position="187"/>
        <end position="222"/>
    </location>
</feature>
<feature type="domain" description="EF-hand 6" evidence="1">
    <location>
        <begin position="223"/>
        <end position="258"/>
    </location>
</feature>
<feature type="binding site" evidence="1">
    <location>
        <position position="21"/>
    </location>
    <ligand>
        <name>Ca(2+)</name>
        <dbReference type="ChEBI" id="CHEBI:29108"/>
        <label>1</label>
    </ligand>
</feature>
<feature type="binding site" evidence="1">
    <location>
        <position position="23"/>
    </location>
    <ligand>
        <name>Ca(2+)</name>
        <dbReference type="ChEBI" id="CHEBI:29108"/>
        <label>1</label>
    </ligand>
</feature>
<feature type="binding site" evidence="1">
    <location>
        <position position="25"/>
    </location>
    <ligand>
        <name>Ca(2+)</name>
        <dbReference type="ChEBI" id="CHEBI:29108"/>
        <label>1</label>
    </ligand>
</feature>
<feature type="binding site" evidence="1">
    <location>
        <position position="27"/>
    </location>
    <ligand>
        <name>Ca(2+)</name>
        <dbReference type="ChEBI" id="CHEBI:29108"/>
        <label>1</label>
    </ligand>
</feature>
<feature type="binding site" evidence="1">
    <location>
        <position position="32"/>
    </location>
    <ligand>
        <name>Ca(2+)</name>
        <dbReference type="ChEBI" id="CHEBI:29108"/>
        <label>1</label>
    </ligand>
</feature>
<feature type="binding site" evidence="1">
    <location>
        <position position="57"/>
    </location>
    <ligand>
        <name>Ca(2+)</name>
        <dbReference type="ChEBI" id="CHEBI:29108"/>
        <label>2</label>
    </ligand>
</feature>
<feature type="binding site" evidence="1">
    <location>
        <position position="59"/>
    </location>
    <ligand>
        <name>Ca(2+)</name>
        <dbReference type="ChEBI" id="CHEBI:29108"/>
        <label>2</label>
    </ligand>
</feature>
<feature type="binding site" evidence="1">
    <location>
        <position position="61"/>
    </location>
    <ligand>
        <name>Ca(2+)</name>
        <dbReference type="ChEBI" id="CHEBI:29108"/>
        <label>2</label>
    </ligand>
</feature>
<feature type="binding site" evidence="1">
    <location>
        <position position="63"/>
    </location>
    <ligand>
        <name>Ca(2+)</name>
        <dbReference type="ChEBI" id="CHEBI:29108"/>
        <label>2</label>
    </ligand>
</feature>
<feature type="binding site" evidence="1">
    <location>
        <position position="68"/>
    </location>
    <ligand>
        <name>Ca(2+)</name>
        <dbReference type="ChEBI" id="CHEBI:29108"/>
        <label>2</label>
    </ligand>
</feature>
<feature type="binding site" evidence="1">
    <location>
        <position position="110"/>
    </location>
    <ligand>
        <name>Ca(2+)</name>
        <dbReference type="ChEBI" id="CHEBI:29108"/>
        <label>3</label>
    </ligand>
</feature>
<feature type="binding site" evidence="1">
    <location>
        <position position="112"/>
    </location>
    <ligand>
        <name>Ca(2+)</name>
        <dbReference type="ChEBI" id="CHEBI:29108"/>
        <label>3</label>
    </ligand>
</feature>
<feature type="binding site" evidence="1">
    <location>
        <position position="114"/>
    </location>
    <ligand>
        <name>Ca(2+)</name>
        <dbReference type="ChEBI" id="CHEBI:29108"/>
        <label>3</label>
    </ligand>
</feature>
<feature type="binding site" evidence="1">
    <location>
        <position position="116"/>
    </location>
    <ligand>
        <name>Ca(2+)</name>
        <dbReference type="ChEBI" id="CHEBI:29108"/>
        <label>3</label>
    </ligand>
</feature>
<feature type="binding site" evidence="1">
    <location>
        <position position="121"/>
    </location>
    <ligand>
        <name>Ca(2+)</name>
        <dbReference type="ChEBI" id="CHEBI:29108"/>
        <label>3</label>
    </ligand>
</feature>
<feature type="binding site" evidence="1">
    <location>
        <position position="146"/>
    </location>
    <ligand>
        <name>Ca(2+)</name>
        <dbReference type="ChEBI" id="CHEBI:29108"/>
        <label>4</label>
    </ligand>
</feature>
<feature type="binding site" evidence="1">
    <location>
        <position position="148"/>
    </location>
    <ligand>
        <name>Ca(2+)</name>
        <dbReference type="ChEBI" id="CHEBI:29108"/>
        <label>4</label>
    </ligand>
</feature>
<feature type="binding site" evidence="1">
    <location>
        <position position="150"/>
    </location>
    <ligand>
        <name>Ca(2+)</name>
        <dbReference type="ChEBI" id="CHEBI:29108"/>
        <label>4</label>
    </ligand>
</feature>
<feature type="binding site" evidence="1">
    <location>
        <position position="152"/>
    </location>
    <ligand>
        <name>Ca(2+)</name>
        <dbReference type="ChEBI" id="CHEBI:29108"/>
        <label>4</label>
    </ligand>
</feature>
<feature type="binding site" evidence="1">
    <location>
        <position position="157"/>
    </location>
    <ligand>
        <name>Ca(2+)</name>
        <dbReference type="ChEBI" id="CHEBI:29108"/>
        <label>4</label>
    </ligand>
</feature>
<feature type="binding site" evidence="1">
    <location>
        <position position="200"/>
    </location>
    <ligand>
        <name>Ca(2+)</name>
        <dbReference type="ChEBI" id="CHEBI:29108"/>
        <label>5</label>
    </ligand>
</feature>
<feature type="binding site" evidence="1">
    <location>
        <position position="202"/>
    </location>
    <ligand>
        <name>Ca(2+)</name>
        <dbReference type="ChEBI" id="CHEBI:29108"/>
        <label>5</label>
    </ligand>
</feature>
<feature type="binding site" evidence="1">
    <location>
        <position position="204"/>
    </location>
    <ligand>
        <name>Ca(2+)</name>
        <dbReference type="ChEBI" id="CHEBI:29108"/>
        <label>5</label>
    </ligand>
</feature>
<feature type="binding site" evidence="1">
    <location>
        <position position="206"/>
    </location>
    <ligand>
        <name>Ca(2+)</name>
        <dbReference type="ChEBI" id="CHEBI:29108"/>
        <label>5</label>
    </ligand>
</feature>
<feature type="binding site" evidence="1">
    <location>
        <position position="211"/>
    </location>
    <ligand>
        <name>Ca(2+)</name>
        <dbReference type="ChEBI" id="CHEBI:29108"/>
        <label>5</label>
    </ligand>
</feature>
<feature type="binding site" evidence="1">
    <location>
        <position position="236"/>
    </location>
    <ligand>
        <name>Ca(2+)</name>
        <dbReference type="ChEBI" id="CHEBI:29108"/>
        <label>6</label>
    </ligand>
</feature>
<feature type="binding site" evidence="1">
    <location>
        <position position="238"/>
    </location>
    <ligand>
        <name>Ca(2+)</name>
        <dbReference type="ChEBI" id="CHEBI:29108"/>
        <label>6</label>
    </ligand>
</feature>
<feature type="binding site" evidence="1">
    <location>
        <position position="240"/>
    </location>
    <ligand>
        <name>Ca(2+)</name>
        <dbReference type="ChEBI" id="CHEBI:29108"/>
        <label>6</label>
    </ligand>
</feature>
<feature type="binding site" evidence="1">
    <location>
        <position position="242"/>
    </location>
    <ligand>
        <name>Ca(2+)</name>
        <dbReference type="ChEBI" id="CHEBI:29108"/>
        <label>6</label>
    </ligand>
</feature>
<feature type="binding site" evidence="1">
    <location>
        <position position="247"/>
    </location>
    <ligand>
        <name>Ca(2+)</name>
        <dbReference type="ChEBI" id="CHEBI:29108"/>
        <label>6</label>
    </ligand>
</feature>
<feature type="sequence conflict" description="In Ref. 1; AAC37419." evidence="7" ref="1">
    <original>QTKA</original>
    <variation>KQKL</variation>
    <location>
        <begin position="223"/>
        <end position="226"/>
    </location>
</feature>
<keyword id="KW-0025">Alternative splicing</keyword>
<keyword id="KW-0106">Calcium</keyword>
<keyword id="KW-0479">Metal-binding</keyword>
<keyword id="KW-1185">Reference proteome</keyword>
<keyword id="KW-0677">Repeat</keyword>
<dbReference type="EMBL" id="L34546">
    <property type="protein sequence ID" value="AAC37419.1"/>
    <property type="molecule type" value="Genomic_DNA"/>
</dbReference>
<dbReference type="EMBL" id="D45848">
    <property type="protein sequence ID" value="BAA08282.1"/>
    <property type="molecule type" value="Genomic_DNA"/>
</dbReference>
<dbReference type="EMBL" id="AC004261">
    <property type="protein sequence ID" value="AAD12001.1"/>
    <property type="molecule type" value="Genomic_DNA"/>
</dbReference>
<dbReference type="EMBL" id="CP002685">
    <property type="protein sequence ID" value="AEC09928.1"/>
    <property type="molecule type" value="Genomic_DNA"/>
</dbReference>
<dbReference type="EMBL" id="CP002685">
    <property type="protein sequence ID" value="AEC09931.1"/>
    <property type="molecule type" value="Genomic_DNA"/>
</dbReference>
<dbReference type="EMBL" id="AF424577">
    <property type="protein sequence ID" value="AAL11571.1"/>
    <property type="molecule type" value="mRNA"/>
</dbReference>
<dbReference type="EMBL" id="AY120719">
    <property type="protein sequence ID" value="AAM53277.1"/>
    <property type="molecule type" value="mRNA"/>
</dbReference>
<dbReference type="EMBL" id="BT000036">
    <property type="protein sequence ID" value="AAN15355.1"/>
    <property type="molecule type" value="mRNA"/>
</dbReference>
<dbReference type="PIR" id="B34669">
    <property type="entry name" value="B34669"/>
</dbReference>
<dbReference type="PIR" id="T02109">
    <property type="entry name" value="T02109"/>
</dbReference>
<dbReference type="RefSeq" id="NP_001189723.1">
    <molecule id="P25071-1"/>
    <property type="nucleotide sequence ID" value="NM_001202794.1"/>
</dbReference>
<dbReference type="RefSeq" id="NP_181643.1">
    <molecule id="P25071-1"/>
    <property type="nucleotide sequence ID" value="NM_129675.5"/>
</dbReference>
<dbReference type="SMR" id="P25071"/>
<dbReference type="BioGRID" id="4046">
    <property type="interactions" value="7"/>
</dbReference>
<dbReference type="FunCoup" id="P25071">
    <property type="interactions" value="212"/>
</dbReference>
<dbReference type="IntAct" id="P25071">
    <property type="interactions" value="89"/>
</dbReference>
<dbReference type="STRING" id="3702.P25071"/>
<dbReference type="iPTMnet" id="P25071"/>
<dbReference type="PaxDb" id="3702-AT2G41100.4"/>
<dbReference type="ProteomicsDB" id="240987">
    <molecule id="P25071-1"/>
</dbReference>
<dbReference type="DNASU" id="818709"/>
<dbReference type="EnsemblPlants" id="AT2G41100.1">
    <molecule id="P25071-1"/>
    <property type="protein sequence ID" value="AT2G41100.1"/>
    <property type="gene ID" value="AT2G41100"/>
</dbReference>
<dbReference type="EnsemblPlants" id="AT2G41100.4">
    <molecule id="P25071-1"/>
    <property type="protein sequence ID" value="AT2G41100.4"/>
    <property type="gene ID" value="AT2G41100"/>
</dbReference>
<dbReference type="GeneID" id="818709"/>
<dbReference type="Gramene" id="AT2G41100.1">
    <molecule id="P25071-1"/>
    <property type="protein sequence ID" value="AT2G41100.1"/>
    <property type="gene ID" value="AT2G41100"/>
</dbReference>
<dbReference type="Gramene" id="AT2G41100.4">
    <molecule id="P25071-1"/>
    <property type="protein sequence ID" value="AT2G41100.4"/>
    <property type="gene ID" value="AT2G41100"/>
</dbReference>
<dbReference type="KEGG" id="ath:AT2G41100"/>
<dbReference type="Araport" id="AT2G41100"/>
<dbReference type="TAIR" id="AT2G41100">
    <property type="gene designation" value="TCH3"/>
</dbReference>
<dbReference type="eggNOG" id="KOG0027">
    <property type="taxonomic scope" value="Eukaryota"/>
</dbReference>
<dbReference type="InParanoid" id="P25071"/>
<dbReference type="OrthoDB" id="26525at2759"/>
<dbReference type="PhylomeDB" id="P25071"/>
<dbReference type="CD-CODE" id="4299E36E">
    <property type="entry name" value="Nucleolus"/>
</dbReference>
<dbReference type="PRO" id="PR:P25071"/>
<dbReference type="Proteomes" id="UP000006548">
    <property type="component" value="Chromosome 2"/>
</dbReference>
<dbReference type="ExpressionAtlas" id="P25071">
    <property type="expression patterns" value="baseline and differential"/>
</dbReference>
<dbReference type="GO" id="GO:0005829">
    <property type="term" value="C:cytosol"/>
    <property type="evidence" value="ECO:0007005"/>
    <property type="project" value="TAIR"/>
</dbReference>
<dbReference type="GO" id="GO:0000325">
    <property type="term" value="C:plant-type vacuole"/>
    <property type="evidence" value="ECO:0007005"/>
    <property type="project" value="TAIR"/>
</dbReference>
<dbReference type="GO" id="GO:0009506">
    <property type="term" value="C:plasmodesma"/>
    <property type="evidence" value="ECO:0007005"/>
    <property type="project" value="TAIR"/>
</dbReference>
<dbReference type="GO" id="GO:0005509">
    <property type="term" value="F:calcium ion binding"/>
    <property type="evidence" value="ECO:0000314"/>
    <property type="project" value="TAIR"/>
</dbReference>
<dbReference type="GO" id="GO:0003729">
    <property type="term" value="F:mRNA binding"/>
    <property type="evidence" value="ECO:0000314"/>
    <property type="project" value="TAIR"/>
</dbReference>
<dbReference type="GO" id="GO:0071456">
    <property type="term" value="P:cellular response to hypoxia"/>
    <property type="evidence" value="ECO:0007007"/>
    <property type="project" value="TAIR"/>
</dbReference>
<dbReference type="GO" id="GO:0009646">
    <property type="term" value="P:response to absence of light"/>
    <property type="evidence" value="ECO:0000270"/>
    <property type="project" value="TAIR"/>
</dbReference>
<dbReference type="GO" id="GO:0009612">
    <property type="term" value="P:response to mechanical stimulus"/>
    <property type="evidence" value="ECO:0000270"/>
    <property type="project" value="TAIR"/>
</dbReference>
<dbReference type="GO" id="GO:0009652">
    <property type="term" value="P:thigmotropism"/>
    <property type="evidence" value="ECO:0000270"/>
    <property type="project" value="TAIR"/>
</dbReference>
<dbReference type="CDD" id="cd00051">
    <property type="entry name" value="EFh"/>
    <property type="match status" value="3"/>
</dbReference>
<dbReference type="FunFam" id="1.10.238.10:FF:000305">
    <property type="entry name" value="Calmodulin, variant"/>
    <property type="match status" value="3"/>
</dbReference>
<dbReference type="Gene3D" id="1.10.238.10">
    <property type="entry name" value="EF-hand"/>
    <property type="match status" value="3"/>
</dbReference>
<dbReference type="InterPro" id="IPR050230">
    <property type="entry name" value="CALM/Myosin/TropC-like"/>
</dbReference>
<dbReference type="InterPro" id="IPR011992">
    <property type="entry name" value="EF-hand-dom_pair"/>
</dbReference>
<dbReference type="InterPro" id="IPR018247">
    <property type="entry name" value="EF_Hand_1_Ca_BS"/>
</dbReference>
<dbReference type="InterPro" id="IPR002048">
    <property type="entry name" value="EF_hand_dom"/>
</dbReference>
<dbReference type="PANTHER" id="PTHR23048:SF0">
    <property type="entry name" value="CALMODULIN LIKE 3"/>
    <property type="match status" value="1"/>
</dbReference>
<dbReference type="PANTHER" id="PTHR23048">
    <property type="entry name" value="MYOSIN LIGHT CHAIN 1, 3"/>
    <property type="match status" value="1"/>
</dbReference>
<dbReference type="Pfam" id="PF13499">
    <property type="entry name" value="EF-hand_7"/>
    <property type="match status" value="3"/>
</dbReference>
<dbReference type="SMART" id="SM00054">
    <property type="entry name" value="EFh"/>
    <property type="match status" value="6"/>
</dbReference>
<dbReference type="SUPFAM" id="SSF47473">
    <property type="entry name" value="EF-hand"/>
    <property type="match status" value="2"/>
</dbReference>
<dbReference type="PROSITE" id="PS00018">
    <property type="entry name" value="EF_HAND_1"/>
    <property type="match status" value="6"/>
</dbReference>
<dbReference type="PROSITE" id="PS50222">
    <property type="entry name" value="EF_HAND_2"/>
    <property type="match status" value="6"/>
</dbReference>
<comment type="function">
    <text>Potential calcium sensor that binds calcium in vitro.</text>
</comment>
<comment type="subunit">
    <text evidence="2 4">Interacts with PID (PubMed:12857841). Binds to ABCG36 (PubMed:26315018).</text>
</comment>
<comment type="interaction">
    <interactant intactId="EBI-1238781">
        <id>P25071</id>
    </interactant>
    <interactant intactId="EBI-1393382">
        <id>O64682</id>
        <label>PID</label>
    </interactant>
    <organismsDiffer>false</organismsDiffer>
    <experiments>4</experiments>
</comment>
<comment type="alternative products">
    <event type="alternative splicing"/>
    <isoform>
        <id>P25071-1</id>
        <name>1</name>
        <sequence type="displayed"/>
    </isoform>
    <text>A number of isoforms are produced. According to EST sequences.</text>
</comment>
<comment type="induction">
    <text evidence="2 3">By auxin, rain-, wind-, and touch (thigmomorphogenesis) and during darkness conditions.</text>
</comment>
<comment type="similarity">
    <text evidence="7">Belongs to the calmodulin family.</text>
</comment>
<sequence>MADKLTDDQITEYRESFRLFDKNGDGSITKKELGTMMRSIGEKPTKADLQDLMNEADLDGDGTIDFPEFLCVMAKNQGHDQAPRHTKKTMADKLTDDQITEYRESFRLFDKNGDGSITKKELRTVMFSLGKNRTKADLQDMMNEVDLDGDGTIDFPEFLYLMAKNQGHDQAPRHTKKTMVDYQLTDDQILEFREAFRVFDKNGDGYITVNELRTTMRSLGETQTKAELQDMINEADADGDGTISFSEFVCVMTGKMIDTQSKKETYRVVNQGQGQVQRHTRNDRAGGTNWERDIAVGVASNIIASPISDFMKDRFKDLFEALLS</sequence>
<accession>P25071</accession>
<accession>Q38972</accession>
<accession>Q39064</accession>
<accession>Q8H1A0</accession>
<gene>
    <name evidence="6" type="primary">CML12</name>
    <name type="synonym">CAL4</name>
    <name evidence="5" type="synonym">TCH3</name>
    <name evidence="8" type="ordered locus">At2g41100</name>
    <name evidence="9" type="ORF">T3K9.13</name>
</gene>
<reference key="1">
    <citation type="journal article" date="1990" name="Cell">
        <title>Rain-, wind-, and touch-induced expression of calmodulin and calmodulin-related genes in Arabidopsis.</title>
        <authorList>
            <person name="Braam J."/>
            <person name="Davis R.W."/>
        </authorList>
    </citation>
    <scope>NUCLEOTIDE SEQUENCE [GENOMIC DNA]</scope>
    <source>
        <strain>cv. Columbia</strain>
    </source>
</reference>
<reference key="2">
    <citation type="journal article" date="1994" name="Plant Cell">
        <title>Arabidopsis TCH3 encodes a novel Ca2+ binding protein and shows environmentally induced and tissue-specific regulation.</title>
        <authorList>
            <person name="Sistrunk M.L."/>
            <person name="Antosiewicz D.M."/>
            <person name="Purugganan M.M."/>
            <person name="Braam J."/>
        </authorList>
    </citation>
    <scope>SEQUENCE REVISION</scope>
</reference>
<reference key="3">
    <citation type="journal article" date="1995" name="Plant Cell Physiol.">
        <title>Touch-inducible genes for calmodulin and a calmodulin-related protein are located in tandem on a chromosome of Arabidopsis thaliana.</title>
        <authorList>
            <person name="Ito T."/>
            <person name="Hirano M."/>
            <person name="Akama K."/>
            <person name="Shimura Y."/>
            <person name="Okada K."/>
        </authorList>
    </citation>
    <scope>NUCLEOTIDE SEQUENCE [GENOMIC DNA]</scope>
    <source>
        <strain>cv. Landsberg erecta</strain>
    </source>
</reference>
<reference key="4">
    <citation type="journal article" date="1999" name="Nature">
        <title>Sequence and analysis of chromosome 2 of the plant Arabidopsis thaliana.</title>
        <authorList>
            <person name="Lin X."/>
            <person name="Kaul S."/>
            <person name="Rounsley S.D."/>
            <person name="Shea T.P."/>
            <person name="Benito M.-I."/>
            <person name="Town C.D."/>
            <person name="Fujii C.Y."/>
            <person name="Mason T.M."/>
            <person name="Bowman C.L."/>
            <person name="Barnstead M.E."/>
            <person name="Feldblyum T.V."/>
            <person name="Buell C.R."/>
            <person name="Ketchum K.A."/>
            <person name="Lee J.J."/>
            <person name="Ronning C.M."/>
            <person name="Koo H.L."/>
            <person name="Moffat K.S."/>
            <person name="Cronin L.A."/>
            <person name="Shen M."/>
            <person name="Pai G."/>
            <person name="Van Aken S."/>
            <person name="Umayam L."/>
            <person name="Tallon L.J."/>
            <person name="Gill J.E."/>
            <person name="Adams M.D."/>
            <person name="Carrera A.J."/>
            <person name="Creasy T.H."/>
            <person name="Goodman H.M."/>
            <person name="Somerville C.R."/>
            <person name="Copenhaver G.P."/>
            <person name="Preuss D."/>
            <person name="Nierman W.C."/>
            <person name="White O."/>
            <person name="Eisen J.A."/>
            <person name="Salzberg S.L."/>
            <person name="Fraser C.M."/>
            <person name="Venter J.C."/>
        </authorList>
    </citation>
    <scope>NUCLEOTIDE SEQUENCE [LARGE SCALE GENOMIC DNA]</scope>
    <source>
        <strain>cv. Columbia</strain>
    </source>
</reference>
<reference key="5">
    <citation type="journal article" date="2017" name="Plant J.">
        <title>Araport11: a complete reannotation of the Arabidopsis thaliana reference genome.</title>
        <authorList>
            <person name="Cheng C.Y."/>
            <person name="Krishnakumar V."/>
            <person name="Chan A.P."/>
            <person name="Thibaud-Nissen F."/>
            <person name="Schobel S."/>
            <person name="Town C.D."/>
        </authorList>
    </citation>
    <scope>GENOME REANNOTATION</scope>
    <source>
        <strain>cv. Columbia</strain>
    </source>
</reference>
<reference key="6">
    <citation type="journal article" date="2003" name="Science">
        <title>Empirical analysis of transcriptional activity in the Arabidopsis genome.</title>
        <authorList>
            <person name="Yamada K."/>
            <person name="Lim J."/>
            <person name="Dale J.M."/>
            <person name="Chen H."/>
            <person name="Shinn P."/>
            <person name="Palm C.J."/>
            <person name="Southwick A.M."/>
            <person name="Wu H.C."/>
            <person name="Kim C.J."/>
            <person name="Nguyen M."/>
            <person name="Pham P.K."/>
            <person name="Cheuk R.F."/>
            <person name="Karlin-Newmann G."/>
            <person name="Liu S.X."/>
            <person name="Lam B."/>
            <person name="Sakano H."/>
            <person name="Wu T."/>
            <person name="Yu G."/>
            <person name="Miranda M."/>
            <person name="Quach H.L."/>
            <person name="Tripp M."/>
            <person name="Chang C.H."/>
            <person name="Lee J.M."/>
            <person name="Toriumi M.J."/>
            <person name="Chan M.M."/>
            <person name="Tang C.C."/>
            <person name="Onodera C.S."/>
            <person name="Deng J.M."/>
            <person name="Akiyama K."/>
            <person name="Ansari Y."/>
            <person name="Arakawa T."/>
            <person name="Banh J."/>
            <person name="Banno F."/>
            <person name="Bowser L."/>
            <person name="Brooks S.Y."/>
            <person name="Carninci P."/>
            <person name="Chao Q."/>
            <person name="Choy N."/>
            <person name="Enju A."/>
            <person name="Goldsmith A.D."/>
            <person name="Gurjal M."/>
            <person name="Hansen N.F."/>
            <person name="Hayashizaki Y."/>
            <person name="Johnson-Hopson C."/>
            <person name="Hsuan V.W."/>
            <person name="Iida K."/>
            <person name="Karnes M."/>
            <person name="Khan S."/>
            <person name="Koesema E."/>
            <person name="Ishida J."/>
            <person name="Jiang P.X."/>
            <person name="Jones T."/>
            <person name="Kawai J."/>
            <person name="Kamiya A."/>
            <person name="Meyers C."/>
            <person name="Nakajima M."/>
            <person name="Narusaka M."/>
            <person name="Seki M."/>
            <person name="Sakurai T."/>
            <person name="Satou M."/>
            <person name="Tamse R."/>
            <person name="Vaysberg M."/>
            <person name="Wallender E.K."/>
            <person name="Wong C."/>
            <person name="Yamamura Y."/>
            <person name="Yuan S."/>
            <person name="Shinozaki K."/>
            <person name="Davis R.W."/>
            <person name="Theologis A."/>
            <person name="Ecker J.R."/>
        </authorList>
    </citation>
    <scope>NUCLEOTIDE SEQUENCE [LARGE SCALE MRNA]</scope>
    <source>
        <strain>cv. Columbia</strain>
    </source>
</reference>
<reference key="7">
    <citation type="journal article" date="2003" name="New Phytol.">
        <title>Calmodulins and related potential calcium sensors of Arabidopsis.</title>
        <authorList>
            <person name="McCormack E."/>
            <person name="Braam J."/>
        </authorList>
    </citation>
    <scope>GENE FAMILY</scope>
    <scope>NOMENCLATURE</scope>
</reference>
<reference key="8">
    <citation type="journal article" date="2003" name="Plant Physiol.">
        <title>PINOID-mediated signaling involves calcium-binding proteins.</title>
        <authorList>
            <person name="Benjamins R."/>
            <person name="Ampudia C.S."/>
            <person name="Hooykaas P.J."/>
            <person name="Offringa R."/>
        </authorList>
    </citation>
    <scope>INTERACTION WITH PID</scope>
    <scope>INDUCTION BY AUXIN</scope>
</reference>
<reference key="9">
    <citation type="journal article" date="2005" name="New Phytol.">
        <title>Genome-wide identification of touch- and darkness-regulated Arabidopsis genes: a focus on calmodulin-like and XTH genes.</title>
        <authorList>
            <person name="Lee D."/>
            <person name="Polisensky D.H."/>
            <person name="Braam J."/>
        </authorList>
    </citation>
    <scope>INDUCTION</scope>
</reference>
<reference key="10">
    <citation type="journal article" date="2016" name="New Phytol.">
        <title>ABC transporter PEN3/PDR8/ABCG36 interacts with calmodulin that, like PEN3, is required for Arabidopsis nonhost resistance.</title>
        <authorList>
            <person name="Campe R."/>
            <person name="Langenbach C."/>
            <person name="Leissing F."/>
            <person name="Popescu G.V."/>
            <person name="Popescu S.C."/>
            <person name="Goellner K."/>
            <person name="Beckers G.J."/>
            <person name="Conrath U."/>
        </authorList>
    </citation>
    <scope>INTERACTION WITH ABCG36</scope>
    <source>
        <strain>cv. Columbia</strain>
    </source>
</reference>
<protein>
    <recommendedName>
        <fullName evidence="6">Calmodulin-like protein 12</fullName>
    </recommendedName>
    <alternativeName>
        <fullName evidence="5">Touch-induced calmodulin-related protein 3</fullName>
    </alternativeName>
</protein>
<organism>
    <name type="scientific">Arabidopsis thaliana</name>
    <name type="common">Mouse-ear cress</name>
    <dbReference type="NCBI Taxonomy" id="3702"/>
    <lineage>
        <taxon>Eukaryota</taxon>
        <taxon>Viridiplantae</taxon>
        <taxon>Streptophyta</taxon>
        <taxon>Embryophyta</taxon>
        <taxon>Tracheophyta</taxon>
        <taxon>Spermatophyta</taxon>
        <taxon>Magnoliopsida</taxon>
        <taxon>eudicotyledons</taxon>
        <taxon>Gunneridae</taxon>
        <taxon>Pentapetalae</taxon>
        <taxon>rosids</taxon>
        <taxon>malvids</taxon>
        <taxon>Brassicales</taxon>
        <taxon>Brassicaceae</taxon>
        <taxon>Camelineae</taxon>
        <taxon>Arabidopsis</taxon>
    </lineage>
</organism>